<organism>
    <name type="scientific">Fusobacterium nucleatum subsp. nucleatum (strain ATCC 25586 / DSM 15643 / BCRC 10681 / CIP 101130 / JCM 8532 / KCTC 2640 / LMG 13131 / VPI 4355)</name>
    <dbReference type="NCBI Taxonomy" id="190304"/>
    <lineage>
        <taxon>Bacteria</taxon>
        <taxon>Fusobacteriati</taxon>
        <taxon>Fusobacteriota</taxon>
        <taxon>Fusobacteriia</taxon>
        <taxon>Fusobacteriales</taxon>
        <taxon>Fusobacteriaceae</taxon>
        <taxon>Fusobacterium</taxon>
    </lineage>
</organism>
<proteinExistence type="inferred from homology"/>
<comment type="function">
    <text evidence="2">Sodium pump that utilizes the energy of pyrophosphate hydrolysis as the driving force for Na(+) movement across the membrane.</text>
</comment>
<comment type="catalytic activity">
    <reaction evidence="2">
        <text>Na(+)(in) + diphosphate + H2O = Na(+)(out) + 2 phosphate + H(+)</text>
        <dbReference type="Rhea" id="RHEA:57884"/>
        <dbReference type="ChEBI" id="CHEBI:15377"/>
        <dbReference type="ChEBI" id="CHEBI:15378"/>
        <dbReference type="ChEBI" id="CHEBI:29101"/>
        <dbReference type="ChEBI" id="CHEBI:33019"/>
        <dbReference type="ChEBI" id="CHEBI:43474"/>
        <dbReference type="EC" id="7.2.3.1"/>
    </reaction>
</comment>
<comment type="cofactor">
    <cofactor evidence="2">
        <name>Mg(2+)</name>
        <dbReference type="ChEBI" id="CHEBI:18420"/>
    </cofactor>
</comment>
<comment type="activity regulation">
    <text evidence="2">Requires K(+) for maximal activity.</text>
</comment>
<comment type="subunit">
    <text evidence="2">Homodimer.</text>
</comment>
<comment type="subcellular location">
    <subcellularLocation>
        <location evidence="2">Cell inner membrane</location>
        <topology evidence="2">Multi-pass membrane protein</topology>
    </subcellularLocation>
</comment>
<comment type="similarity">
    <text evidence="2">Belongs to the H(+)-translocating pyrophosphatase (TC 3.A.10) family. K(+)-stimulated subfamily.</text>
</comment>
<keyword id="KW-0106">Calcium</keyword>
<keyword id="KW-0997">Cell inner membrane</keyword>
<keyword id="KW-1003">Cell membrane</keyword>
<keyword id="KW-0406">Ion transport</keyword>
<keyword id="KW-0460">Magnesium</keyword>
<keyword id="KW-0472">Membrane</keyword>
<keyword id="KW-0479">Metal-binding</keyword>
<keyword id="KW-0630">Potassium</keyword>
<keyword id="KW-1185">Reference proteome</keyword>
<keyword id="KW-0915">Sodium</keyword>
<keyword id="KW-0739">Sodium transport</keyword>
<keyword id="KW-1278">Translocase</keyword>
<keyword id="KW-0812">Transmembrane</keyword>
<keyword id="KW-1133">Transmembrane helix</keyword>
<keyword id="KW-0813">Transport</keyword>
<gene>
    <name evidence="2" type="primary">hppA</name>
    <name type="ordered locus">FN2030</name>
</gene>
<protein>
    <recommendedName>
        <fullName evidence="2">Putative K(+)-stimulated pyrophosphate-energized sodium pump</fullName>
        <ecNumber evidence="2">7.2.3.1</ecNumber>
    </recommendedName>
    <alternativeName>
        <fullName evidence="2">Membrane-bound sodium-translocating pyrophosphatase</fullName>
    </alternativeName>
    <alternativeName>
        <fullName evidence="2">Pyrophosphate-energized inorganic pyrophosphatase</fullName>
        <shortName evidence="2">Na(+)-PPase</shortName>
    </alternativeName>
</protein>
<feature type="chain" id="PRO_0000217003" description="Putative K(+)-stimulated pyrophosphate-energized sodium pump">
    <location>
        <begin position="1"/>
        <end position="671"/>
    </location>
</feature>
<feature type="transmembrane region" description="Helical" evidence="2">
    <location>
        <begin position="3"/>
        <end position="23"/>
    </location>
</feature>
<feature type="transmembrane region" description="Helical" evidence="2">
    <location>
        <begin position="60"/>
        <end position="80"/>
    </location>
</feature>
<feature type="transmembrane region" description="Helical" evidence="2">
    <location>
        <begin position="81"/>
        <end position="101"/>
    </location>
</feature>
<feature type="transmembrane region" description="Helical" evidence="2">
    <location>
        <begin position="130"/>
        <end position="150"/>
    </location>
</feature>
<feature type="transmembrane region" description="Helical" evidence="2">
    <location>
        <begin position="154"/>
        <end position="174"/>
    </location>
</feature>
<feature type="transmembrane region" description="Helical" evidence="2">
    <location>
        <begin position="229"/>
        <end position="249"/>
    </location>
</feature>
<feature type="transmembrane region" description="Helical" evidence="2">
    <location>
        <begin position="255"/>
        <end position="275"/>
    </location>
</feature>
<feature type="transmembrane region" description="Helical" evidence="2">
    <location>
        <begin position="295"/>
        <end position="315"/>
    </location>
</feature>
<feature type="transmembrane region" description="Helical" evidence="2">
    <location>
        <begin position="317"/>
        <end position="337"/>
    </location>
</feature>
<feature type="transmembrane region" description="Helical" evidence="2">
    <location>
        <begin position="365"/>
        <end position="385"/>
    </location>
</feature>
<feature type="transmembrane region" description="Helical" evidence="2">
    <location>
        <begin position="392"/>
        <end position="412"/>
    </location>
</feature>
<feature type="transmembrane region" description="Helical" evidence="2">
    <location>
        <begin position="450"/>
        <end position="470"/>
    </location>
</feature>
<feature type="transmembrane region" description="Helical" evidence="2">
    <location>
        <begin position="493"/>
        <end position="513"/>
    </location>
</feature>
<feature type="transmembrane region" description="Helical" evidence="2">
    <location>
        <begin position="559"/>
        <end position="579"/>
    </location>
</feature>
<feature type="transmembrane region" description="Helical" evidence="2">
    <location>
        <begin position="581"/>
        <end position="601"/>
    </location>
</feature>
<feature type="transmembrane region" description="Helical" evidence="2">
    <location>
        <begin position="651"/>
        <end position="671"/>
    </location>
</feature>
<feature type="binding site" evidence="1">
    <location>
        <position position="184"/>
    </location>
    <ligand>
        <name>substrate</name>
    </ligand>
</feature>
<feature type="binding site" evidence="1">
    <location>
        <position position="187"/>
    </location>
    <ligand>
        <name>Mg(2+)</name>
        <dbReference type="ChEBI" id="CHEBI:18420"/>
        <label>1</label>
    </ligand>
</feature>
<feature type="binding site" evidence="1">
    <location>
        <position position="191"/>
    </location>
    <ligand>
        <name>Mg(2+)</name>
        <dbReference type="ChEBI" id="CHEBI:18420"/>
        <label>1</label>
    </ligand>
</feature>
<feature type="binding site" evidence="1">
    <location>
        <position position="214"/>
    </location>
    <ligand>
        <name>Mg(2+)</name>
        <dbReference type="ChEBI" id="CHEBI:18420"/>
        <label>2</label>
    </ligand>
</feature>
<feature type="binding site" evidence="1">
    <location>
        <position position="217"/>
    </location>
    <ligand>
        <name>Mg(2+)</name>
        <dbReference type="ChEBI" id="CHEBI:18420"/>
        <label>2</label>
    </ligand>
</feature>
<feature type="binding site" evidence="1">
    <location>
        <position position="420"/>
    </location>
    <ligand>
        <name>Mg(2+)</name>
        <dbReference type="ChEBI" id="CHEBI:18420"/>
        <label>2</label>
    </ligand>
</feature>
<feature type="binding site" evidence="1">
    <location>
        <position position="608"/>
    </location>
    <ligand>
        <name>Ca(2+)</name>
        <dbReference type="ChEBI" id="CHEBI:29108"/>
    </ligand>
</feature>
<feature type="binding site" evidence="1">
    <location>
        <position position="635"/>
    </location>
    <ligand>
        <name>Ca(2+)</name>
        <dbReference type="ChEBI" id="CHEBI:29108"/>
    </ligand>
</feature>
<feature type="binding site" evidence="1">
    <location>
        <position position="639"/>
    </location>
    <ligand>
        <name>Ca(2+)</name>
        <dbReference type="ChEBI" id="CHEBI:29108"/>
    </ligand>
</feature>
<feature type="binding site" evidence="1">
    <location>
        <position position="642"/>
    </location>
    <ligand>
        <name>substrate</name>
    </ligand>
</feature>
<feature type="site" description="Important for ion transport" evidence="1">
    <location>
        <position position="176"/>
    </location>
</feature>
<feature type="site" description="Important for ion transport" evidence="1">
    <location>
        <position position="221"/>
    </location>
</feature>
<feature type="site" description="Important for ion transport" evidence="1">
    <location>
        <position position="228"/>
    </location>
</feature>
<feature type="site" description="Determinant of potassium dependence" evidence="2">
    <location>
        <position position="450"/>
    </location>
</feature>
<feature type="site" description="Important for ion transport" evidence="1">
    <location>
        <position position="643"/>
    </location>
</feature>
<feature type="site" description="Important for ion transport" evidence="1">
    <location>
        <position position="654"/>
    </location>
</feature>
<dbReference type="EC" id="7.2.3.1" evidence="2"/>
<dbReference type="EMBL" id="AE009951">
    <property type="protein sequence ID" value="AAL94115.1"/>
    <property type="molecule type" value="Genomic_DNA"/>
</dbReference>
<dbReference type="RefSeq" id="NP_602816.1">
    <property type="nucleotide sequence ID" value="NC_003454.1"/>
</dbReference>
<dbReference type="RefSeq" id="WP_011015989.1">
    <property type="nucleotide sequence ID" value="NZ_OZ209243.1"/>
</dbReference>
<dbReference type="SMR" id="Q8RHJ2"/>
<dbReference type="STRING" id="190304.FN2030"/>
<dbReference type="PaxDb" id="190304-FN2030"/>
<dbReference type="EnsemblBacteria" id="AAL94115">
    <property type="protein sequence ID" value="AAL94115"/>
    <property type="gene ID" value="FN2030"/>
</dbReference>
<dbReference type="KEGG" id="fnu:FN2030"/>
<dbReference type="PATRIC" id="fig|190304.8.peg.493"/>
<dbReference type="eggNOG" id="COG3808">
    <property type="taxonomic scope" value="Bacteria"/>
</dbReference>
<dbReference type="HOGENOM" id="CLU_008743_3_1_0"/>
<dbReference type="InParanoid" id="Q8RHJ2"/>
<dbReference type="BioCyc" id="FNUC190304:G1FZS-517-MONOMER"/>
<dbReference type="Proteomes" id="UP000002521">
    <property type="component" value="Chromosome"/>
</dbReference>
<dbReference type="GO" id="GO:0005886">
    <property type="term" value="C:plasma membrane"/>
    <property type="evidence" value="ECO:0007669"/>
    <property type="project" value="UniProtKB-SubCell"/>
</dbReference>
<dbReference type="GO" id="GO:0009678">
    <property type="term" value="F:diphosphate hydrolysis-driven proton transmembrane transporter activity"/>
    <property type="evidence" value="ECO:0007669"/>
    <property type="project" value="UniProtKB-UniRule"/>
</dbReference>
<dbReference type="GO" id="GO:0004427">
    <property type="term" value="F:inorganic diphosphate phosphatase activity"/>
    <property type="evidence" value="ECO:0007669"/>
    <property type="project" value="UniProtKB-UniRule"/>
</dbReference>
<dbReference type="GO" id="GO:0000287">
    <property type="term" value="F:magnesium ion binding"/>
    <property type="evidence" value="ECO:0007669"/>
    <property type="project" value="UniProtKB-UniRule"/>
</dbReference>
<dbReference type="GO" id="GO:0030955">
    <property type="term" value="F:potassium ion binding"/>
    <property type="evidence" value="ECO:0007669"/>
    <property type="project" value="UniProtKB-UniRule"/>
</dbReference>
<dbReference type="GO" id="GO:0006814">
    <property type="term" value="P:sodium ion transport"/>
    <property type="evidence" value="ECO:0007669"/>
    <property type="project" value="UniProtKB-UniRule"/>
</dbReference>
<dbReference type="HAMAP" id="MF_01129">
    <property type="entry name" value="PPase_energized_pump"/>
    <property type="match status" value="1"/>
</dbReference>
<dbReference type="InterPro" id="IPR004131">
    <property type="entry name" value="PPase-energised_H-pump"/>
</dbReference>
<dbReference type="NCBIfam" id="NF001960">
    <property type="entry name" value="PRK00733.3-5"/>
    <property type="match status" value="1"/>
</dbReference>
<dbReference type="NCBIfam" id="TIGR01104">
    <property type="entry name" value="V_PPase"/>
    <property type="match status" value="1"/>
</dbReference>
<dbReference type="PANTHER" id="PTHR31998">
    <property type="entry name" value="K(+)-INSENSITIVE PYROPHOSPHATE-ENERGIZED PROTON PUMP"/>
    <property type="match status" value="1"/>
</dbReference>
<dbReference type="Pfam" id="PF03030">
    <property type="entry name" value="H_PPase"/>
    <property type="match status" value="1"/>
</dbReference>
<dbReference type="PIRSF" id="PIRSF001265">
    <property type="entry name" value="H+-PPase"/>
    <property type="match status" value="1"/>
</dbReference>
<reference key="1">
    <citation type="journal article" date="2002" name="J. Bacteriol.">
        <title>Genome sequence and analysis of the oral bacterium Fusobacterium nucleatum strain ATCC 25586.</title>
        <authorList>
            <person name="Kapatral V."/>
            <person name="Anderson I."/>
            <person name="Ivanova N."/>
            <person name="Reznik G."/>
            <person name="Los T."/>
            <person name="Lykidis A."/>
            <person name="Bhattacharyya A."/>
            <person name="Bartman A."/>
            <person name="Gardner W."/>
            <person name="Grechkin G."/>
            <person name="Zhu L."/>
            <person name="Vasieva O."/>
            <person name="Chu L."/>
            <person name="Kogan Y."/>
            <person name="Chaga O."/>
            <person name="Goltsman E."/>
            <person name="Bernal A."/>
            <person name="Larsen N."/>
            <person name="D'Souza M."/>
            <person name="Walunas T."/>
            <person name="Pusch G."/>
            <person name="Haselkorn R."/>
            <person name="Fonstein M."/>
            <person name="Kyrpides N.C."/>
            <person name="Overbeek R."/>
        </authorList>
    </citation>
    <scope>NUCLEOTIDE SEQUENCE [LARGE SCALE GENOMIC DNA]</scope>
    <source>
        <strain>ATCC 25586 / DSM 15643 / BCRC 10681 / CIP 101130 / JCM 8532 / KCTC 2640 / LMG 13131 / VPI 4355</strain>
    </source>
</reference>
<name>HPPA_FUSNN</name>
<evidence type="ECO:0000250" key="1"/>
<evidence type="ECO:0000255" key="2">
    <source>
        <dbReference type="HAMAP-Rule" id="MF_01129"/>
    </source>
</evidence>
<sequence>MDLLTQVMYIGIAVGIISLLAAFYYAKKVEHYQINIPKVEEITAAIREGAMAFLAAEYKILIVFVIVVAVALGIFISVPTAGAFILGAITSAIAGNAGMRIATKANGRTAIAAKEGGLAKALNVAFSGGAVMGLTVVGLGMFMLSLILLVSRTVGISVNDVTGFGMGASSIALFARVGGGIYTKAADVGADLVGKVEAGIPEDDPRNPATIADNVGDNVGDVAGMGADLFESYVGSIIATITLAFLLPVDDATPYVAAPLLISAFGIISSIIATLTVKTDDGSKVHAKLEMGTRIAGILTIIASFGIIKYLGLDMGIFYAIVAGLVAGLVIAYFTGVYTDTGRRAVNRVSDAAGTGAATAIIEGLAIGMESTVAPLIVIAIAIIISFKTGGLYGISIAAVGMLATTGMVVAVDAYGPVADNAGGIAEMSELPPEVRETTDKLDAVGNSTAAVGKGFAIGSAALTALSLFAAYKEAVDKLTSEALVIDVTDPEVIAGLFIGGMLTFLFSALTMTAVGKAAIEMVEEVRRQFREFPGIMDRTQKPDYKRCVEISTHSSLKQMILPGVLAIIVPVIIGLWSVKALGGLLAGALVTGVLMAIMMANAGGAWDNGKKQIEGGYKGDKKGSDRHKAAVVGDTVGDPFKDTSGPSLNILIKLMSIVSLVLVPLFVKFM</sequence>
<accession>Q8RHJ2</accession>